<sequence>MPKNSKVVKRDLDDDVIESVKDLLSNEDSVEEVSKKSELIVDVQEEKDTDAEDGSEADDERPAWNSKLQYILAQVGFSVGLGNVWRFPYLCQKNGGGAYLLPYLILLLVIGIPLFFLELSVGQRIRRGSIGVWNYISPKLGGIGFASCVVCYFVALYYNVIIGWTLFYFSQSFQQPLPWDQCPLVKNASHTYVEPECEQSSATTYYWYREALDITSSISDSGGLNWKMTVCLLVAWVMVCLAMIKGIQSSGKIMYFSSLFPYVVLICFLIRSLLLNGSIDGIRHMFTPKLEMMLEPKVWREAATQVFFALGLGFGGVIAFSSYNKRDNNCHFDAVLVSFINFFTSVLATLVVFAVLGFKANIVNEKCISQNSEMILKLLKMGNISWDVIPHHINLSAVTVEDYRLVYDIIQKVKEEEFAVLHLNACQIEDELNKAVQGTGLAFIAFTEAMTHFPASPFWSVMFFLMLINLGLGSMFGTIEGIITPIVDTFKVRKEILTVICCLLAFCIGLIFVQRSGNYFVTMFDDYSATLPLLIVVILENIAVSFVYGIDKFIEDLTDMLGFAPSKYYYYMWKYISPLMLLTLLIASIVNMGLSPPGYNAWIKEKASEEFLSYPMWGMVVCFSLMVLAILPVPVVFIIRRCNLIDDSSGNLASVTYKRGRVLKEPVNLEGDDASLIHGKIPSEMSSPNFGKNIYRKQSGSPTLDTAPNGRYGIGYLMADMPDMPESDL</sequence>
<protein>
    <recommendedName>
        <fullName>Sodium-dependent neutral amino acid transporter B(0)AT2</fullName>
    </recommendedName>
    <alternativeName>
        <fullName>Sodium- and chloride-dependent neurotransmitter transporter NTT73</fullName>
    </alternativeName>
    <alternativeName>
        <fullName>Solute carrier family 6 member 15</fullName>
    </alternativeName>
    <alternativeName>
        <fullName>Transporter v7-3</fullName>
    </alternativeName>
</protein>
<comment type="function">
    <text evidence="1 4">Functions as a sodium-dependent neutral amino acid transporter. Exhibits preference for methionine and for the branched-chain amino acids, particularly leucine, valine and isoleucine. Can also transport low-affinity substrates such as alanine, phenylalanine, glutamine and pipecolic acid (PubMed:16185194). Mediates the saturable, pH-sensitive and electrogenic cotransport of proline and sodium ions with a stoichiometry of 1:1. May have a role as transporter for neurotransmitter precursors into neurons. In contrast to other members of the neurotransmitter transporter family, does not appear to be chloride-dependent (By similarity).</text>
</comment>
<comment type="catalytic activity">
    <reaction evidence="4">
        <text>L-pipecolate(in) + Na(+)(in) = L-pipecolate(out) + Na(+)(out)</text>
        <dbReference type="Rhea" id="RHEA:71387"/>
        <dbReference type="ChEBI" id="CHEBI:29101"/>
        <dbReference type="ChEBI" id="CHEBI:61185"/>
    </reaction>
</comment>
<comment type="catalytic activity">
    <reaction evidence="4">
        <text>L-leucine(in) + Na(+)(in) = L-leucine(out) + Na(+)(out)</text>
        <dbReference type="Rhea" id="RHEA:29263"/>
        <dbReference type="ChEBI" id="CHEBI:29101"/>
        <dbReference type="ChEBI" id="CHEBI:57427"/>
    </reaction>
</comment>
<comment type="catalytic activity">
    <reaction evidence="4">
        <text>L-isoleucine(in) + Na(+)(in) = L-isoleucine(out) + Na(+)(out)</text>
        <dbReference type="Rhea" id="RHEA:29275"/>
        <dbReference type="ChEBI" id="CHEBI:29101"/>
        <dbReference type="ChEBI" id="CHEBI:58045"/>
    </reaction>
</comment>
<comment type="catalytic activity">
    <reaction evidence="4">
        <text>L-methionine(in) + Na(+)(in) = L-methionine(out) + Na(+)(out)</text>
        <dbReference type="Rhea" id="RHEA:68240"/>
        <dbReference type="ChEBI" id="CHEBI:29101"/>
        <dbReference type="ChEBI" id="CHEBI:57844"/>
    </reaction>
</comment>
<comment type="catalytic activity">
    <reaction evidence="4">
        <text>L-proline(in) + Na(+)(in) = L-proline(out) + Na(+)(out)</text>
        <dbReference type="Rhea" id="RHEA:28967"/>
        <dbReference type="ChEBI" id="CHEBI:29101"/>
        <dbReference type="ChEBI" id="CHEBI:60039"/>
    </reaction>
</comment>
<comment type="catalytic activity">
    <reaction evidence="4">
        <text>L-alanine(in) + Na(+)(in) = L-alanine(out) + Na(+)(out)</text>
        <dbReference type="Rhea" id="RHEA:29283"/>
        <dbReference type="ChEBI" id="CHEBI:29101"/>
        <dbReference type="ChEBI" id="CHEBI:57972"/>
    </reaction>
</comment>
<comment type="catalytic activity">
    <reaction evidence="4">
        <text>L-asparagine(in) + Na(+)(in) = L-asparagine(out) + Na(+)(out)</text>
        <dbReference type="Rhea" id="RHEA:71383"/>
        <dbReference type="ChEBI" id="CHEBI:29101"/>
        <dbReference type="ChEBI" id="CHEBI:58048"/>
    </reaction>
</comment>
<comment type="catalytic activity">
    <reaction evidence="4">
        <text>L-valine(in) + Na(+)(in) = L-valine(out) + Na(+)(out)</text>
        <dbReference type="Rhea" id="RHEA:29267"/>
        <dbReference type="ChEBI" id="CHEBI:29101"/>
        <dbReference type="ChEBI" id="CHEBI:57762"/>
    </reaction>
</comment>
<comment type="catalytic activity">
    <reaction evidence="1">
        <text>L-cysteine(in) + Na(+)(in) = L-cysteine(out) + Na(+)(out)</text>
        <dbReference type="Rhea" id="RHEA:68232"/>
        <dbReference type="ChEBI" id="CHEBI:29101"/>
        <dbReference type="ChEBI" id="CHEBI:35235"/>
    </reaction>
</comment>
<comment type="catalytic activity">
    <reaction evidence="4">
        <text>L-glutamine(in) + Na(+)(in) = L-glutamine(out) + Na(+)(out)</text>
        <dbReference type="Rhea" id="RHEA:68236"/>
        <dbReference type="ChEBI" id="CHEBI:29101"/>
        <dbReference type="ChEBI" id="CHEBI:58359"/>
    </reaction>
</comment>
<comment type="catalytic activity">
    <reaction evidence="4">
        <text>L-serine(in) + Na(+)(in) = L-serine(out) + Na(+)(out)</text>
        <dbReference type="Rhea" id="RHEA:29575"/>
        <dbReference type="ChEBI" id="CHEBI:29101"/>
        <dbReference type="ChEBI" id="CHEBI:33384"/>
    </reaction>
</comment>
<comment type="catalytic activity">
    <reaction evidence="4">
        <text>L-threonine(in) + Na(+)(in) = L-threonine(out) + Na(+)(out)</text>
        <dbReference type="Rhea" id="RHEA:69999"/>
        <dbReference type="ChEBI" id="CHEBI:29101"/>
        <dbReference type="ChEBI" id="CHEBI:57926"/>
    </reaction>
</comment>
<comment type="catalytic activity">
    <reaction evidence="4">
        <text>L-phenylalanine(in) + Na(+)(in) = L-phenylalanine(out) + Na(+)(out)</text>
        <dbReference type="Rhea" id="RHEA:68244"/>
        <dbReference type="ChEBI" id="CHEBI:29101"/>
        <dbReference type="ChEBI" id="CHEBI:58095"/>
    </reaction>
</comment>
<comment type="biophysicochemical properties">
    <kinetics>
        <KM evidence="4">195 uM for proline (in the presence of 100 mM NaCL)</KM>
        <KM evidence="4">510 uM for proline (in the presence of 30 mM NaCL)</KM>
        <KM evidence="4">790 uM for proline (in the presence of 3 mM NaCL)</KM>
        <KM evidence="4">81 uM for leucine</KM>
        <KM evidence="4">58 uM for isoleucine</KM>
        <KM evidence="4">40 uM for methionine</KM>
        <KM evidence="4">670 uM for alanine</KM>
        <KM evidence="4">900 uM for pipecolate</KM>
    </kinetics>
    <phDependence>
        <text evidence="4">Optimum pH is 7.5-8.5.</text>
    </phDependence>
</comment>
<comment type="subcellular location">
    <subcellularLocation>
        <location evidence="8">Membrane</location>
        <topology evidence="7">Multi-pass membrane protein</topology>
    </subcellularLocation>
</comment>
<comment type="tissue specificity">
    <text evidence="4">Significant expressed in brain, lung and kidney. In brain, mainly expressed int the cortex, the cerebellum and the brain stem.</text>
</comment>
<comment type="developmental stage">
    <text evidence="4">Detected throughout development, starting with the pre-implantation embryo.</text>
</comment>
<comment type="disruption phenotype">
    <text evidence="5">Mice are viable and fertile and fail to demonstrate any striking abnormality in motor and sensory functions. Other transporters could help to compensate for loss of SLC6A15.</text>
</comment>
<comment type="similarity">
    <text evidence="7">Belongs to the sodium:neurotransmitter symporter (SNF) (TC 2.A.22) family. SLC6A15 subfamily.</text>
</comment>
<accession>Q8BG16</accession>
<accession>Q333Y0</accession>
<organism>
    <name type="scientific">Mus musculus</name>
    <name type="common">Mouse</name>
    <dbReference type="NCBI Taxonomy" id="10090"/>
    <lineage>
        <taxon>Eukaryota</taxon>
        <taxon>Metazoa</taxon>
        <taxon>Chordata</taxon>
        <taxon>Craniata</taxon>
        <taxon>Vertebrata</taxon>
        <taxon>Euteleostomi</taxon>
        <taxon>Mammalia</taxon>
        <taxon>Eutheria</taxon>
        <taxon>Euarchontoglires</taxon>
        <taxon>Glires</taxon>
        <taxon>Rodentia</taxon>
        <taxon>Myomorpha</taxon>
        <taxon>Muroidea</taxon>
        <taxon>Muridae</taxon>
        <taxon>Murinae</taxon>
        <taxon>Mus</taxon>
        <taxon>Mus</taxon>
    </lineage>
</organism>
<feature type="chain" id="PRO_0000214799" description="Sodium-dependent neutral amino acid transporter B(0)AT2">
    <location>
        <begin position="1"/>
        <end position="729"/>
    </location>
</feature>
<feature type="topological domain" description="Cytoplasmic" evidence="2">
    <location>
        <begin position="1"/>
        <end position="69"/>
    </location>
</feature>
<feature type="transmembrane region" description="Helical; Name=1" evidence="2">
    <location>
        <begin position="70"/>
        <end position="90"/>
    </location>
</feature>
<feature type="transmembrane region" description="Helical; Name=2" evidence="2">
    <location>
        <begin position="98"/>
        <end position="117"/>
    </location>
</feature>
<feature type="transmembrane region" description="Helical; Name=3" evidence="2">
    <location>
        <begin position="142"/>
        <end position="162"/>
    </location>
</feature>
<feature type="topological domain" description="Extracellular" evidence="2">
    <location>
        <begin position="163"/>
        <end position="225"/>
    </location>
</feature>
<feature type="transmembrane region" description="Helical; Name=4" evidence="2">
    <location>
        <begin position="226"/>
        <end position="244"/>
    </location>
</feature>
<feature type="transmembrane region" description="Helical; Name=5" evidence="2">
    <location>
        <begin position="253"/>
        <end position="270"/>
    </location>
</feature>
<feature type="transmembrane region" description="Helical; Name=6" evidence="2">
    <location>
        <begin position="306"/>
        <end position="323"/>
    </location>
</feature>
<feature type="transmembrane region" description="Helical; Name=7" evidence="2">
    <location>
        <begin position="335"/>
        <end position="356"/>
    </location>
</feature>
<feature type="topological domain" description="Extracellular" evidence="2">
    <location>
        <begin position="357"/>
        <end position="452"/>
    </location>
</feature>
<feature type="transmembrane region" description="Helical; Name=8" evidence="2">
    <location>
        <begin position="453"/>
        <end position="472"/>
    </location>
</feature>
<feature type="transmembrane region" description="Helical; Name=9" evidence="2">
    <location>
        <begin position="496"/>
        <end position="514"/>
    </location>
</feature>
<feature type="transmembrane region" description="Helical; Name=10" evidence="2">
    <location>
        <begin position="530"/>
        <end position="550"/>
    </location>
</feature>
<feature type="transmembrane region" description="Helical; Name=11" evidence="2">
    <location>
        <begin position="571"/>
        <end position="592"/>
    </location>
</feature>
<feature type="transmembrane region" description="Helical; Name=12" evidence="2">
    <location>
        <begin position="620"/>
        <end position="642"/>
    </location>
</feature>
<feature type="topological domain" description="Cytoplasmic" evidence="2">
    <location>
        <begin position="643"/>
        <end position="729"/>
    </location>
</feature>
<feature type="region of interest" description="Disordered" evidence="3">
    <location>
        <begin position="42"/>
        <end position="61"/>
    </location>
</feature>
<feature type="compositionally biased region" description="Acidic residues" evidence="3">
    <location>
        <begin position="43"/>
        <end position="59"/>
    </location>
</feature>
<feature type="modified residue" description="Phosphoserine" evidence="1">
    <location>
        <position position="25"/>
    </location>
</feature>
<feature type="modified residue" description="Phosphoserine" evidence="1">
    <location>
        <position position="55"/>
    </location>
</feature>
<feature type="modified residue" description="Phosphoserine" evidence="1">
    <location>
        <position position="687"/>
    </location>
</feature>
<feature type="modified residue" description="Phosphoserine" evidence="1">
    <location>
        <position position="699"/>
    </location>
</feature>
<feature type="modified residue" description="Phosphoserine" evidence="1">
    <location>
        <position position="701"/>
    </location>
</feature>
<feature type="glycosylation site" description="N-linked (GlcNAc...) asparagine" evidence="2">
    <location>
        <position position="187"/>
    </location>
</feature>
<feature type="glycosylation site" description="N-linked (GlcNAc...) asparagine" evidence="2">
    <location>
        <position position="276"/>
    </location>
</feature>
<feature type="glycosylation site" description="N-linked (GlcNAc...) asparagine" evidence="2">
    <location>
        <position position="383"/>
    </location>
</feature>
<feature type="glycosylation site" description="N-linked (GlcNAc...) asparagine" evidence="2">
    <location>
        <position position="394"/>
    </location>
</feature>
<keyword id="KW-0029">Amino-acid transport</keyword>
<keyword id="KW-0325">Glycoprotein</keyword>
<keyword id="KW-0406">Ion transport</keyword>
<keyword id="KW-0472">Membrane</keyword>
<keyword id="KW-0532">Neurotransmitter transport</keyword>
<keyword id="KW-0597">Phosphoprotein</keyword>
<keyword id="KW-1185">Reference proteome</keyword>
<keyword id="KW-0915">Sodium</keyword>
<keyword id="KW-0739">Sodium transport</keyword>
<keyword id="KW-0769">Symport</keyword>
<keyword id="KW-0812">Transmembrane</keyword>
<keyword id="KW-1133">Transmembrane helix</keyword>
<keyword id="KW-0813">Transport</keyword>
<evidence type="ECO:0000250" key="1">
    <source>
        <dbReference type="UniProtKB" id="Q9H2J7"/>
    </source>
</evidence>
<evidence type="ECO:0000255" key="2"/>
<evidence type="ECO:0000256" key="3">
    <source>
        <dbReference type="SAM" id="MobiDB-lite"/>
    </source>
</evidence>
<evidence type="ECO:0000269" key="4">
    <source>
    </source>
</evidence>
<evidence type="ECO:0000269" key="5">
    <source>
    </source>
</evidence>
<evidence type="ECO:0000303" key="6">
    <source>
    </source>
</evidence>
<evidence type="ECO:0000305" key="7"/>
<evidence type="ECO:0000305" key="8">
    <source>
    </source>
</evidence>
<proteinExistence type="evidence at protein level"/>
<reference key="1">
    <citation type="submission" date="2002-09" db="EMBL/GenBank/DDBJ databases">
        <title>Mouse sodium-dependent orphan neurotransmitter transporter V73 cDNA.</title>
        <authorList>
            <person name="Liu Q.-R."/>
            <person name="Uhl G.R."/>
        </authorList>
    </citation>
    <scope>NUCLEOTIDE SEQUENCE [MRNA]</scope>
    <source>
        <strain>C57BL/6J</strain>
    </source>
</reference>
<reference key="2">
    <citation type="submission" date="2002-09" db="EMBL/GenBank/DDBJ databases">
        <title>Characterization of orphan neurotransmitter transporter V73 genomic structure.</title>
        <authorList>
            <person name="Liu Q.-R."/>
            <person name="Uhl G.R."/>
        </authorList>
    </citation>
    <scope>NUCLEOTIDE SEQUENCE [GENOMIC DNA / MRNA]</scope>
    <source>
        <strain>129/SvJ</strain>
    </source>
</reference>
<reference key="3">
    <citation type="journal article" date="2006" name="Biochem. J.">
        <title>The orphan transporter v7-3 (slc6a15) is a Na+-dependent neutral amino acid transporter (B0AT2).</title>
        <authorList>
            <person name="Broer A."/>
            <person name="Tietze N."/>
            <person name="Kowalczuk S."/>
            <person name="Chubb S."/>
            <person name="Munzinger M."/>
            <person name="Bak L.K."/>
            <person name="Broer S."/>
        </authorList>
    </citation>
    <scope>NUCLEOTIDE SEQUENCE [MRNA]</scope>
    <scope>FUNCTION</scope>
    <scope>BIOPHYSICOCHEMICAL PROPERTIES</scope>
    <scope>TISSUE SPECIFICITY</scope>
    <scope>DEVELOPMENTAL STAGE</scope>
    <scope>TRANSPORTER ACTIVITY</scope>
    <scope>SUBCELLULAR LOCATION</scope>
    <source>
        <strain>C57BL/6J</strain>
        <tissue>Brain</tissue>
    </source>
</reference>
<reference key="4">
    <citation type="journal article" date="2005" name="Science">
        <title>The transcriptional landscape of the mammalian genome.</title>
        <authorList>
            <person name="Carninci P."/>
            <person name="Kasukawa T."/>
            <person name="Katayama S."/>
            <person name="Gough J."/>
            <person name="Frith M.C."/>
            <person name="Maeda N."/>
            <person name="Oyama R."/>
            <person name="Ravasi T."/>
            <person name="Lenhard B."/>
            <person name="Wells C."/>
            <person name="Kodzius R."/>
            <person name="Shimokawa K."/>
            <person name="Bajic V.B."/>
            <person name="Brenner S.E."/>
            <person name="Batalov S."/>
            <person name="Forrest A.R."/>
            <person name="Zavolan M."/>
            <person name="Davis M.J."/>
            <person name="Wilming L.G."/>
            <person name="Aidinis V."/>
            <person name="Allen J.E."/>
            <person name="Ambesi-Impiombato A."/>
            <person name="Apweiler R."/>
            <person name="Aturaliya R.N."/>
            <person name="Bailey T.L."/>
            <person name="Bansal M."/>
            <person name="Baxter L."/>
            <person name="Beisel K.W."/>
            <person name="Bersano T."/>
            <person name="Bono H."/>
            <person name="Chalk A.M."/>
            <person name="Chiu K.P."/>
            <person name="Choudhary V."/>
            <person name="Christoffels A."/>
            <person name="Clutterbuck D.R."/>
            <person name="Crowe M.L."/>
            <person name="Dalla E."/>
            <person name="Dalrymple B.P."/>
            <person name="de Bono B."/>
            <person name="Della Gatta G."/>
            <person name="di Bernardo D."/>
            <person name="Down T."/>
            <person name="Engstrom P."/>
            <person name="Fagiolini M."/>
            <person name="Faulkner G."/>
            <person name="Fletcher C.F."/>
            <person name="Fukushima T."/>
            <person name="Furuno M."/>
            <person name="Futaki S."/>
            <person name="Gariboldi M."/>
            <person name="Georgii-Hemming P."/>
            <person name="Gingeras T.R."/>
            <person name="Gojobori T."/>
            <person name="Green R.E."/>
            <person name="Gustincich S."/>
            <person name="Harbers M."/>
            <person name="Hayashi Y."/>
            <person name="Hensch T.K."/>
            <person name="Hirokawa N."/>
            <person name="Hill D."/>
            <person name="Huminiecki L."/>
            <person name="Iacono M."/>
            <person name="Ikeo K."/>
            <person name="Iwama A."/>
            <person name="Ishikawa T."/>
            <person name="Jakt M."/>
            <person name="Kanapin A."/>
            <person name="Katoh M."/>
            <person name="Kawasawa Y."/>
            <person name="Kelso J."/>
            <person name="Kitamura H."/>
            <person name="Kitano H."/>
            <person name="Kollias G."/>
            <person name="Krishnan S.P."/>
            <person name="Kruger A."/>
            <person name="Kummerfeld S.K."/>
            <person name="Kurochkin I.V."/>
            <person name="Lareau L.F."/>
            <person name="Lazarevic D."/>
            <person name="Lipovich L."/>
            <person name="Liu J."/>
            <person name="Liuni S."/>
            <person name="McWilliam S."/>
            <person name="Madan Babu M."/>
            <person name="Madera M."/>
            <person name="Marchionni L."/>
            <person name="Matsuda H."/>
            <person name="Matsuzawa S."/>
            <person name="Miki H."/>
            <person name="Mignone F."/>
            <person name="Miyake S."/>
            <person name="Morris K."/>
            <person name="Mottagui-Tabar S."/>
            <person name="Mulder N."/>
            <person name="Nakano N."/>
            <person name="Nakauchi H."/>
            <person name="Ng P."/>
            <person name="Nilsson R."/>
            <person name="Nishiguchi S."/>
            <person name="Nishikawa S."/>
            <person name="Nori F."/>
            <person name="Ohara O."/>
            <person name="Okazaki Y."/>
            <person name="Orlando V."/>
            <person name="Pang K.C."/>
            <person name="Pavan W.J."/>
            <person name="Pavesi G."/>
            <person name="Pesole G."/>
            <person name="Petrovsky N."/>
            <person name="Piazza S."/>
            <person name="Reed J."/>
            <person name="Reid J.F."/>
            <person name="Ring B.Z."/>
            <person name="Ringwald M."/>
            <person name="Rost B."/>
            <person name="Ruan Y."/>
            <person name="Salzberg S.L."/>
            <person name="Sandelin A."/>
            <person name="Schneider C."/>
            <person name="Schoenbach C."/>
            <person name="Sekiguchi K."/>
            <person name="Semple C.A."/>
            <person name="Seno S."/>
            <person name="Sessa L."/>
            <person name="Sheng Y."/>
            <person name="Shibata Y."/>
            <person name="Shimada H."/>
            <person name="Shimada K."/>
            <person name="Silva D."/>
            <person name="Sinclair B."/>
            <person name="Sperling S."/>
            <person name="Stupka E."/>
            <person name="Sugiura K."/>
            <person name="Sultana R."/>
            <person name="Takenaka Y."/>
            <person name="Taki K."/>
            <person name="Tammoja K."/>
            <person name="Tan S.L."/>
            <person name="Tang S."/>
            <person name="Taylor M.S."/>
            <person name="Tegner J."/>
            <person name="Teichmann S.A."/>
            <person name="Ueda H.R."/>
            <person name="van Nimwegen E."/>
            <person name="Verardo R."/>
            <person name="Wei C.L."/>
            <person name="Yagi K."/>
            <person name="Yamanishi H."/>
            <person name="Zabarovsky E."/>
            <person name="Zhu S."/>
            <person name="Zimmer A."/>
            <person name="Hide W."/>
            <person name="Bult C."/>
            <person name="Grimmond S.M."/>
            <person name="Teasdale R.D."/>
            <person name="Liu E.T."/>
            <person name="Brusic V."/>
            <person name="Quackenbush J."/>
            <person name="Wahlestedt C."/>
            <person name="Mattick J.S."/>
            <person name="Hume D.A."/>
            <person name="Kai C."/>
            <person name="Sasaki D."/>
            <person name="Tomaru Y."/>
            <person name="Fukuda S."/>
            <person name="Kanamori-Katayama M."/>
            <person name="Suzuki M."/>
            <person name="Aoki J."/>
            <person name="Arakawa T."/>
            <person name="Iida J."/>
            <person name="Imamura K."/>
            <person name="Itoh M."/>
            <person name="Kato T."/>
            <person name="Kawaji H."/>
            <person name="Kawagashira N."/>
            <person name="Kawashima T."/>
            <person name="Kojima M."/>
            <person name="Kondo S."/>
            <person name="Konno H."/>
            <person name="Nakano K."/>
            <person name="Ninomiya N."/>
            <person name="Nishio T."/>
            <person name="Okada M."/>
            <person name="Plessy C."/>
            <person name="Shibata K."/>
            <person name="Shiraki T."/>
            <person name="Suzuki S."/>
            <person name="Tagami M."/>
            <person name="Waki K."/>
            <person name="Watahiki A."/>
            <person name="Okamura-Oho Y."/>
            <person name="Suzuki H."/>
            <person name="Kawai J."/>
            <person name="Hayashizaki Y."/>
        </authorList>
    </citation>
    <scope>NUCLEOTIDE SEQUENCE [LARGE SCALE MRNA]</scope>
    <source>
        <strain>C57BL/6J</strain>
        <tissue>Cerebellum</tissue>
    </source>
</reference>
<reference key="5">
    <citation type="submission" date="2005-07" db="EMBL/GenBank/DDBJ databases">
        <authorList>
            <person name="Mural R.J."/>
            <person name="Adams M.D."/>
            <person name="Myers E.W."/>
            <person name="Smith H.O."/>
            <person name="Venter J.C."/>
        </authorList>
    </citation>
    <scope>NUCLEOTIDE SEQUENCE [LARGE SCALE GENOMIC DNA]</scope>
</reference>
<reference key="6">
    <citation type="journal article" date="2004" name="Genome Res.">
        <title>The status, quality, and expansion of the NIH full-length cDNA project: the Mammalian Gene Collection (MGC).</title>
        <authorList>
            <consortium name="The MGC Project Team"/>
        </authorList>
    </citation>
    <scope>NUCLEOTIDE SEQUENCE [LARGE SCALE MRNA]</scope>
    <source>
        <strain>C57BL/6J</strain>
        <tissue>Eye</tissue>
    </source>
</reference>
<reference key="7">
    <citation type="journal article" date="2007" name="Brain Res.">
        <title>Deletion of v7-3 (SLC6A15) transporter allows assessment of its roles in synaptosomal proline uptake, leucine uptake and behaviors.</title>
        <authorList>
            <person name="Drgonova J."/>
            <person name="Liu Q.R."/>
            <person name="Hall F.S."/>
            <person name="Krieger R.M."/>
            <person name="Uhl G.R."/>
        </authorList>
    </citation>
    <scope>DISRUPTION PHENOTYPE</scope>
</reference>
<reference key="8">
    <citation type="journal article" date="2010" name="Cell">
        <title>A tissue-specific atlas of mouse protein phosphorylation and expression.</title>
        <authorList>
            <person name="Huttlin E.L."/>
            <person name="Jedrychowski M.P."/>
            <person name="Elias J.E."/>
            <person name="Goswami T."/>
            <person name="Rad R."/>
            <person name="Beausoleil S.A."/>
            <person name="Villen J."/>
            <person name="Haas W."/>
            <person name="Sowa M.E."/>
            <person name="Gygi S.P."/>
        </authorList>
    </citation>
    <scope>IDENTIFICATION BY MASS SPECTROMETRY [LARGE SCALE ANALYSIS]</scope>
    <source>
        <tissue>Brain</tissue>
    </source>
</reference>
<dbReference type="EMBL" id="AY149280">
    <property type="protein sequence ID" value="AAN75437.1"/>
    <property type="molecule type" value="mRNA"/>
</dbReference>
<dbReference type="EMBL" id="AY149281">
    <property type="protein sequence ID" value="AAN75438.1"/>
    <property type="molecule type" value="mRNA"/>
</dbReference>
<dbReference type="EMBL" id="AY149282">
    <property type="protein sequence ID" value="AAN75439.1"/>
    <property type="molecule type" value="Genomic_DNA"/>
</dbReference>
<dbReference type="EMBL" id="AM085111">
    <property type="protein sequence ID" value="CAJ29896.1"/>
    <property type="molecule type" value="mRNA"/>
</dbReference>
<dbReference type="EMBL" id="AK036136">
    <property type="protein sequence ID" value="BAC29315.1"/>
    <property type="molecule type" value="mRNA"/>
</dbReference>
<dbReference type="EMBL" id="CH466539">
    <property type="protein sequence ID" value="EDL21676.1"/>
    <property type="molecule type" value="Genomic_DNA"/>
</dbReference>
<dbReference type="EMBL" id="CH466539">
    <property type="protein sequence ID" value="EDL21677.1"/>
    <property type="molecule type" value="Genomic_DNA"/>
</dbReference>
<dbReference type="EMBL" id="BC076593">
    <property type="protein sequence ID" value="AAH76593.1"/>
    <property type="molecule type" value="mRNA"/>
</dbReference>
<dbReference type="CCDS" id="CCDS24156.1"/>
<dbReference type="RefSeq" id="NP_001239259.1">
    <property type="nucleotide sequence ID" value="NM_001252330.1"/>
</dbReference>
<dbReference type="RefSeq" id="NP_001345750.1">
    <property type="nucleotide sequence ID" value="NM_001358821.1"/>
</dbReference>
<dbReference type="RefSeq" id="NP_780537.1">
    <property type="nucleotide sequence ID" value="NM_175328.3"/>
</dbReference>
<dbReference type="RefSeq" id="XP_006513045.1">
    <property type="nucleotide sequence ID" value="XM_006512982.3"/>
</dbReference>
<dbReference type="RefSeq" id="XP_006513046.1">
    <property type="nucleotide sequence ID" value="XM_006512983.5"/>
</dbReference>
<dbReference type="RefSeq" id="XP_006513047.1">
    <property type="nucleotide sequence ID" value="XM_006512984.5"/>
</dbReference>
<dbReference type="RefSeq" id="XP_036011342.1">
    <property type="nucleotide sequence ID" value="XM_036155449.1"/>
</dbReference>
<dbReference type="SMR" id="Q8BG16"/>
<dbReference type="FunCoup" id="Q8BG16">
    <property type="interactions" value="295"/>
</dbReference>
<dbReference type="STRING" id="10090.ENSMUSP00000073829"/>
<dbReference type="GlyCosmos" id="Q8BG16">
    <property type="glycosylation" value="4 sites, No reported glycans"/>
</dbReference>
<dbReference type="GlyGen" id="Q8BG16">
    <property type="glycosylation" value="4 sites"/>
</dbReference>
<dbReference type="iPTMnet" id="Q8BG16"/>
<dbReference type="PhosphoSitePlus" id="Q8BG16"/>
<dbReference type="SwissPalm" id="Q8BG16"/>
<dbReference type="PaxDb" id="10090-ENSMUSP00000073829"/>
<dbReference type="PeptideAtlas" id="Q8BG16"/>
<dbReference type="ProteomicsDB" id="253391"/>
<dbReference type="Antibodypedia" id="1932">
    <property type="antibodies" value="150 antibodies from 23 providers"/>
</dbReference>
<dbReference type="DNASU" id="103098"/>
<dbReference type="Ensembl" id="ENSMUST00000074204.12">
    <property type="protein sequence ID" value="ENSMUSP00000073829.5"/>
    <property type="gene ID" value="ENSMUSG00000019894.15"/>
</dbReference>
<dbReference type="Ensembl" id="ENSMUST00000179636.3">
    <property type="protein sequence ID" value="ENSMUSP00000136676.2"/>
    <property type="gene ID" value="ENSMUSG00000019894.15"/>
</dbReference>
<dbReference type="GeneID" id="103098"/>
<dbReference type="KEGG" id="mmu:103098"/>
<dbReference type="UCSC" id="uc007gyj.2">
    <property type="organism name" value="mouse"/>
</dbReference>
<dbReference type="AGR" id="MGI:2143484"/>
<dbReference type="CTD" id="55117"/>
<dbReference type="MGI" id="MGI:2143484">
    <property type="gene designation" value="Slc6a15"/>
</dbReference>
<dbReference type="VEuPathDB" id="HostDB:ENSMUSG00000019894"/>
<dbReference type="eggNOG" id="KOG3659">
    <property type="taxonomic scope" value="Eukaryota"/>
</dbReference>
<dbReference type="GeneTree" id="ENSGT00940000157277"/>
<dbReference type="HOGENOM" id="CLU_006855_7_1_1"/>
<dbReference type="InParanoid" id="Q8BG16"/>
<dbReference type="OMA" id="TMTPPSY"/>
<dbReference type="OrthoDB" id="6581954at2759"/>
<dbReference type="PhylomeDB" id="Q8BG16"/>
<dbReference type="TreeFam" id="TF352709"/>
<dbReference type="Reactome" id="R-MMU-352230">
    <property type="pathway name" value="Amino acid transport across the plasma membrane"/>
</dbReference>
<dbReference type="Reactome" id="R-MMU-442660">
    <property type="pathway name" value="Na+/Cl- dependent neurotransmitter transporters"/>
</dbReference>
<dbReference type="BioGRID-ORCS" id="103098">
    <property type="hits" value="1 hit in 76 CRISPR screens"/>
</dbReference>
<dbReference type="PRO" id="PR:Q8BG16"/>
<dbReference type="Proteomes" id="UP000000589">
    <property type="component" value="Chromosome 10"/>
</dbReference>
<dbReference type="RNAct" id="Q8BG16">
    <property type="molecule type" value="protein"/>
</dbReference>
<dbReference type="Bgee" id="ENSMUSG00000019894">
    <property type="expression patterns" value="Expressed in saccule of membranous labyrinth and 200 other cell types or tissues"/>
</dbReference>
<dbReference type="ExpressionAtlas" id="Q8BG16">
    <property type="expression patterns" value="baseline and differential"/>
</dbReference>
<dbReference type="GO" id="GO:0016020">
    <property type="term" value="C:membrane"/>
    <property type="evidence" value="ECO:0000314"/>
    <property type="project" value="UniProtKB"/>
</dbReference>
<dbReference type="GO" id="GO:0005886">
    <property type="term" value="C:plasma membrane"/>
    <property type="evidence" value="ECO:0007669"/>
    <property type="project" value="InterPro"/>
</dbReference>
<dbReference type="GO" id="GO:0015657">
    <property type="term" value="F:branched-chain amino acid:sodium symporter activity"/>
    <property type="evidence" value="ECO:0000314"/>
    <property type="project" value="UniProtKB"/>
</dbReference>
<dbReference type="GO" id="GO:0005295">
    <property type="term" value="F:neutral L-amino acid:sodium symporter activity"/>
    <property type="evidence" value="ECO:0000314"/>
    <property type="project" value="UniProtKB"/>
</dbReference>
<dbReference type="GO" id="GO:0005298">
    <property type="term" value="F:proline:sodium symporter activity"/>
    <property type="evidence" value="ECO:0000314"/>
    <property type="project" value="UniProtKB"/>
</dbReference>
<dbReference type="GO" id="GO:0015820">
    <property type="term" value="P:L-leucine transport"/>
    <property type="evidence" value="ECO:0000314"/>
    <property type="project" value="UniProtKB"/>
</dbReference>
<dbReference type="GO" id="GO:0006836">
    <property type="term" value="P:neurotransmitter transport"/>
    <property type="evidence" value="ECO:0007669"/>
    <property type="project" value="UniProtKB-KW"/>
</dbReference>
<dbReference type="GO" id="GO:0015804">
    <property type="term" value="P:neutral amino acid transport"/>
    <property type="evidence" value="ECO:0000314"/>
    <property type="project" value="UniProtKB"/>
</dbReference>
<dbReference type="GO" id="GO:0015824">
    <property type="term" value="P:proline transport"/>
    <property type="evidence" value="ECO:0000314"/>
    <property type="project" value="UniProtKB"/>
</dbReference>
<dbReference type="CDD" id="cd11522">
    <property type="entry name" value="SLC6sbd_SBAT1"/>
    <property type="match status" value="1"/>
</dbReference>
<dbReference type="InterPro" id="IPR042934">
    <property type="entry name" value="B(0)AT2"/>
</dbReference>
<dbReference type="InterPro" id="IPR000175">
    <property type="entry name" value="Na/ntran_symport"/>
</dbReference>
<dbReference type="InterPro" id="IPR002438">
    <property type="entry name" value="Neutral_aa_SLC6"/>
</dbReference>
<dbReference type="InterPro" id="IPR037272">
    <property type="entry name" value="SNS_sf"/>
</dbReference>
<dbReference type="NCBIfam" id="NF037979">
    <property type="entry name" value="Na_transp"/>
    <property type="match status" value="1"/>
</dbReference>
<dbReference type="PANTHER" id="PTHR11616:SF101">
    <property type="entry name" value="SODIUM-DEPENDENT NEUTRAL AMINO ACID TRANSPORTER B(0)AT2"/>
    <property type="match status" value="1"/>
</dbReference>
<dbReference type="PANTHER" id="PTHR11616">
    <property type="entry name" value="SODIUM/CHLORIDE DEPENDENT TRANSPORTER"/>
    <property type="match status" value="1"/>
</dbReference>
<dbReference type="Pfam" id="PF00209">
    <property type="entry name" value="SNF"/>
    <property type="match status" value="1"/>
</dbReference>
<dbReference type="PRINTS" id="PR00176">
    <property type="entry name" value="NANEUSMPORT"/>
</dbReference>
<dbReference type="PRINTS" id="PR01206">
    <property type="entry name" value="ORPHTRNSPORT"/>
</dbReference>
<dbReference type="SUPFAM" id="SSF161070">
    <property type="entry name" value="SNF-like"/>
    <property type="match status" value="1"/>
</dbReference>
<dbReference type="PROSITE" id="PS00610">
    <property type="entry name" value="NA_NEUROTRAN_SYMP_1"/>
    <property type="match status" value="1"/>
</dbReference>
<dbReference type="PROSITE" id="PS00754">
    <property type="entry name" value="NA_NEUROTRAN_SYMP_2"/>
    <property type="match status" value="1"/>
</dbReference>
<dbReference type="PROSITE" id="PS50267">
    <property type="entry name" value="NA_NEUROTRAN_SYMP_3"/>
    <property type="match status" value="1"/>
</dbReference>
<gene>
    <name type="primary">Slc6a15</name>
    <name evidence="6" type="synonym">B0at2</name>
    <name type="synonym">Ntt73</name>
</gene>
<name>S6A15_MOUSE</name>